<reference key="1">
    <citation type="journal article" date="1998" name="Nature">
        <title>Deciphering the biology of Mycobacterium tuberculosis from the complete genome sequence.</title>
        <authorList>
            <person name="Cole S.T."/>
            <person name="Brosch R."/>
            <person name="Parkhill J."/>
            <person name="Garnier T."/>
            <person name="Churcher C.M."/>
            <person name="Harris D.E."/>
            <person name="Gordon S.V."/>
            <person name="Eiglmeier K."/>
            <person name="Gas S."/>
            <person name="Barry C.E. III"/>
            <person name="Tekaia F."/>
            <person name="Badcock K."/>
            <person name="Basham D."/>
            <person name="Brown D."/>
            <person name="Chillingworth T."/>
            <person name="Connor R."/>
            <person name="Davies R.M."/>
            <person name="Devlin K."/>
            <person name="Feltwell T."/>
            <person name="Gentles S."/>
            <person name="Hamlin N."/>
            <person name="Holroyd S."/>
            <person name="Hornsby T."/>
            <person name="Jagels K."/>
            <person name="Krogh A."/>
            <person name="McLean J."/>
            <person name="Moule S."/>
            <person name="Murphy L.D."/>
            <person name="Oliver S."/>
            <person name="Osborne J."/>
            <person name="Quail M.A."/>
            <person name="Rajandream M.A."/>
            <person name="Rogers J."/>
            <person name="Rutter S."/>
            <person name="Seeger K."/>
            <person name="Skelton S."/>
            <person name="Squares S."/>
            <person name="Squares R."/>
            <person name="Sulston J.E."/>
            <person name="Taylor K."/>
            <person name="Whitehead S."/>
            <person name="Barrell B.G."/>
        </authorList>
    </citation>
    <scope>NUCLEOTIDE SEQUENCE [LARGE SCALE GENOMIC DNA]</scope>
    <source>
        <strain>ATCC 25618 / H37Rv</strain>
    </source>
</reference>
<protein>
    <recommendedName>
        <fullName evidence="1">Small ribosomal subunit protein uS14A</fullName>
    </recommendedName>
    <alternativeName>
        <fullName evidence="3">30S ribosomal protein S14</fullName>
    </alternativeName>
</protein>
<gene>
    <name evidence="1" type="primary">rpsN</name>
    <name type="synonym">rpsN2</name>
    <name type="ordered locus">Rv2056c</name>
    <name type="ORF">MTCY63A.04</name>
</gene>
<keyword id="KW-1185">Reference proteome</keyword>
<keyword id="KW-0687">Ribonucleoprotein</keyword>
<keyword id="KW-0689">Ribosomal protein</keyword>
<keyword id="KW-0694">RNA-binding</keyword>
<keyword id="KW-0699">rRNA-binding</keyword>
<sequence>MAKKSKIVKNQRRAATVARYASRRTALKDIIRSPSSAPEQRSTAQRALARQPRDASPVRLRNRDAIDGRPRGHLRKFGLSRVRVRQLAHDGHLPGVRKASW</sequence>
<feature type="chain" id="PRO_0000130912" description="Small ribosomal subunit protein uS14A">
    <location>
        <begin position="1"/>
        <end position="101"/>
    </location>
</feature>
<feature type="region of interest" description="Disordered" evidence="2">
    <location>
        <begin position="28"/>
        <end position="57"/>
    </location>
</feature>
<feature type="compositionally biased region" description="Polar residues" evidence="2">
    <location>
        <begin position="33"/>
        <end position="45"/>
    </location>
</feature>
<comment type="function">
    <text evidence="1">Binds 16S rRNA, required for the assembly of 30S particles and may also be responsible for determining the conformation of the 16S rRNA at the A site.</text>
</comment>
<comment type="subunit">
    <text evidence="1">Part of the 30S ribosomal subunit. Contacts proteins S3 and S10.</text>
</comment>
<comment type="similarity">
    <text evidence="1">Belongs to the universal ribosomal protein uS14 family.</text>
</comment>
<name>RS14_MYCTU</name>
<accession>P9WH59</accession>
<accession>L0TBC9</accession>
<accession>O86355</accession>
<accession>P66405</accession>
<organism>
    <name type="scientific">Mycobacterium tuberculosis (strain ATCC 25618 / H37Rv)</name>
    <dbReference type="NCBI Taxonomy" id="83332"/>
    <lineage>
        <taxon>Bacteria</taxon>
        <taxon>Bacillati</taxon>
        <taxon>Actinomycetota</taxon>
        <taxon>Actinomycetes</taxon>
        <taxon>Mycobacteriales</taxon>
        <taxon>Mycobacteriaceae</taxon>
        <taxon>Mycobacterium</taxon>
        <taxon>Mycobacterium tuberculosis complex</taxon>
    </lineage>
</organism>
<dbReference type="EMBL" id="AL123456">
    <property type="protein sequence ID" value="CCP44829.1"/>
    <property type="molecule type" value="Genomic_DNA"/>
</dbReference>
<dbReference type="PIR" id="G70945">
    <property type="entry name" value="G70945"/>
</dbReference>
<dbReference type="RefSeq" id="NP_216572.1">
    <property type="nucleotide sequence ID" value="NC_000962.3"/>
</dbReference>
<dbReference type="RefSeq" id="WP_003410624.1">
    <property type="nucleotide sequence ID" value="NZ_NVQJ01000047.1"/>
</dbReference>
<dbReference type="SMR" id="P9WH59"/>
<dbReference type="FunCoup" id="P9WH59">
    <property type="interactions" value="416"/>
</dbReference>
<dbReference type="STRING" id="83332.Rv2056c"/>
<dbReference type="PaxDb" id="83332-Rv2056c"/>
<dbReference type="DNASU" id="887819"/>
<dbReference type="GeneID" id="45426034"/>
<dbReference type="GeneID" id="887819"/>
<dbReference type="KEGG" id="mtu:Rv2056c"/>
<dbReference type="KEGG" id="mtv:RVBD_2056c"/>
<dbReference type="TubercuList" id="Rv2056c"/>
<dbReference type="eggNOG" id="COG0199">
    <property type="taxonomic scope" value="Bacteria"/>
</dbReference>
<dbReference type="InParanoid" id="P9WH59"/>
<dbReference type="OrthoDB" id="9810484at2"/>
<dbReference type="PhylomeDB" id="P9WH59"/>
<dbReference type="PRO" id="PR:P9WH59"/>
<dbReference type="Proteomes" id="UP000001584">
    <property type="component" value="Chromosome"/>
</dbReference>
<dbReference type="GO" id="GO:0009274">
    <property type="term" value="C:peptidoglycan-based cell wall"/>
    <property type="evidence" value="ECO:0007005"/>
    <property type="project" value="MTBBASE"/>
</dbReference>
<dbReference type="GO" id="GO:0015935">
    <property type="term" value="C:small ribosomal subunit"/>
    <property type="evidence" value="ECO:0000318"/>
    <property type="project" value="GO_Central"/>
</dbReference>
<dbReference type="GO" id="GO:0019843">
    <property type="term" value="F:rRNA binding"/>
    <property type="evidence" value="ECO:0007669"/>
    <property type="project" value="UniProtKB-UniRule"/>
</dbReference>
<dbReference type="GO" id="GO:0003735">
    <property type="term" value="F:structural constituent of ribosome"/>
    <property type="evidence" value="ECO:0000318"/>
    <property type="project" value="GO_Central"/>
</dbReference>
<dbReference type="GO" id="GO:0006412">
    <property type="term" value="P:translation"/>
    <property type="evidence" value="ECO:0000318"/>
    <property type="project" value="GO_Central"/>
</dbReference>
<dbReference type="FunFam" id="1.10.287.1480:FF:000001">
    <property type="entry name" value="30S ribosomal protein S14"/>
    <property type="match status" value="1"/>
</dbReference>
<dbReference type="Gene3D" id="1.10.287.1480">
    <property type="match status" value="1"/>
</dbReference>
<dbReference type="HAMAP" id="MF_00537">
    <property type="entry name" value="Ribosomal_uS14_1"/>
    <property type="match status" value="1"/>
</dbReference>
<dbReference type="InterPro" id="IPR001209">
    <property type="entry name" value="Ribosomal_uS14"/>
</dbReference>
<dbReference type="InterPro" id="IPR023036">
    <property type="entry name" value="Ribosomal_uS14_bac/plastid"/>
</dbReference>
<dbReference type="NCBIfam" id="NF006477">
    <property type="entry name" value="PRK08881.1"/>
    <property type="match status" value="1"/>
</dbReference>
<dbReference type="PANTHER" id="PTHR19836">
    <property type="entry name" value="30S RIBOSOMAL PROTEIN S14"/>
    <property type="match status" value="1"/>
</dbReference>
<dbReference type="PANTHER" id="PTHR19836:SF23">
    <property type="entry name" value="SMALL RIBOSOMAL SUBUNIT PROTEIN US14A"/>
    <property type="match status" value="1"/>
</dbReference>
<dbReference type="Pfam" id="PF00253">
    <property type="entry name" value="Ribosomal_S14"/>
    <property type="match status" value="1"/>
</dbReference>
<dbReference type="SUPFAM" id="SSF57716">
    <property type="entry name" value="Glucocorticoid receptor-like (DNA-binding domain)"/>
    <property type="match status" value="1"/>
</dbReference>
<proteinExistence type="inferred from homology"/>
<evidence type="ECO:0000255" key="1">
    <source>
        <dbReference type="HAMAP-Rule" id="MF_00537"/>
    </source>
</evidence>
<evidence type="ECO:0000256" key="2">
    <source>
        <dbReference type="SAM" id="MobiDB-lite"/>
    </source>
</evidence>
<evidence type="ECO:0000305" key="3"/>